<organism>
    <name type="scientific">Chara vulgaris</name>
    <name type="common">Common stonewort</name>
    <dbReference type="NCBI Taxonomy" id="55564"/>
    <lineage>
        <taxon>Eukaryota</taxon>
        <taxon>Viridiplantae</taxon>
        <taxon>Streptophyta</taxon>
        <taxon>Charophyceae</taxon>
        <taxon>Charales</taxon>
        <taxon>Characeae</taxon>
        <taxon>Chara</taxon>
    </lineage>
</organism>
<feature type="chain" id="PRO_0000251690" description="Large ribosomal subunit protein uL16c">
    <location>
        <begin position="1"/>
        <end position="144"/>
    </location>
</feature>
<dbReference type="EMBL" id="DQ229107">
    <property type="protein sequence ID" value="ABA61949.1"/>
    <property type="molecule type" value="Genomic_DNA"/>
</dbReference>
<dbReference type="RefSeq" id="YP_635787.1">
    <property type="nucleotide sequence ID" value="NC_008097.1"/>
</dbReference>
<dbReference type="SMR" id="Q1ACG0"/>
<dbReference type="GeneID" id="4100315"/>
<dbReference type="GO" id="GO:0009507">
    <property type="term" value="C:chloroplast"/>
    <property type="evidence" value="ECO:0007669"/>
    <property type="project" value="UniProtKB-SubCell"/>
</dbReference>
<dbReference type="GO" id="GO:0005762">
    <property type="term" value="C:mitochondrial large ribosomal subunit"/>
    <property type="evidence" value="ECO:0007669"/>
    <property type="project" value="TreeGrafter"/>
</dbReference>
<dbReference type="GO" id="GO:0019843">
    <property type="term" value="F:rRNA binding"/>
    <property type="evidence" value="ECO:0007669"/>
    <property type="project" value="InterPro"/>
</dbReference>
<dbReference type="GO" id="GO:0003735">
    <property type="term" value="F:structural constituent of ribosome"/>
    <property type="evidence" value="ECO:0007669"/>
    <property type="project" value="InterPro"/>
</dbReference>
<dbReference type="GO" id="GO:0032543">
    <property type="term" value="P:mitochondrial translation"/>
    <property type="evidence" value="ECO:0007669"/>
    <property type="project" value="TreeGrafter"/>
</dbReference>
<dbReference type="CDD" id="cd01433">
    <property type="entry name" value="Ribosomal_L16_L10e"/>
    <property type="match status" value="1"/>
</dbReference>
<dbReference type="FunFam" id="3.90.1170.10:FF:000001">
    <property type="entry name" value="50S ribosomal protein L16"/>
    <property type="match status" value="1"/>
</dbReference>
<dbReference type="Gene3D" id="3.90.1170.10">
    <property type="entry name" value="Ribosomal protein L10e/L16"/>
    <property type="match status" value="1"/>
</dbReference>
<dbReference type="HAMAP" id="MF_01342">
    <property type="entry name" value="Ribosomal_uL16"/>
    <property type="match status" value="1"/>
</dbReference>
<dbReference type="InterPro" id="IPR047873">
    <property type="entry name" value="Ribosomal_uL16"/>
</dbReference>
<dbReference type="InterPro" id="IPR000114">
    <property type="entry name" value="Ribosomal_uL16_bact-type"/>
</dbReference>
<dbReference type="InterPro" id="IPR020798">
    <property type="entry name" value="Ribosomal_uL16_CS"/>
</dbReference>
<dbReference type="InterPro" id="IPR016180">
    <property type="entry name" value="Ribosomal_uL16_dom"/>
</dbReference>
<dbReference type="InterPro" id="IPR036920">
    <property type="entry name" value="Ribosomal_uL16_sf"/>
</dbReference>
<dbReference type="NCBIfam" id="TIGR01164">
    <property type="entry name" value="rplP_bact"/>
    <property type="match status" value="1"/>
</dbReference>
<dbReference type="PANTHER" id="PTHR12220">
    <property type="entry name" value="50S/60S RIBOSOMAL PROTEIN L16"/>
    <property type="match status" value="1"/>
</dbReference>
<dbReference type="PANTHER" id="PTHR12220:SF13">
    <property type="entry name" value="LARGE RIBOSOMAL SUBUNIT PROTEIN UL16M"/>
    <property type="match status" value="1"/>
</dbReference>
<dbReference type="Pfam" id="PF00252">
    <property type="entry name" value="Ribosomal_L16"/>
    <property type="match status" value="1"/>
</dbReference>
<dbReference type="PRINTS" id="PR00060">
    <property type="entry name" value="RIBOSOMALL16"/>
</dbReference>
<dbReference type="SUPFAM" id="SSF54686">
    <property type="entry name" value="Ribosomal protein L16p/L10e"/>
    <property type="match status" value="1"/>
</dbReference>
<dbReference type="PROSITE" id="PS00586">
    <property type="entry name" value="RIBOSOMAL_L16_1"/>
    <property type="match status" value="1"/>
</dbReference>
<dbReference type="PROSITE" id="PS00701">
    <property type="entry name" value="RIBOSOMAL_L16_2"/>
    <property type="match status" value="1"/>
</dbReference>
<reference key="1">
    <citation type="journal article" date="2006" name="Mol. Biol. Evol.">
        <title>The chloroplast genome sequence of Chara vulgaris sheds new light into the closest green algal relatives of land plants.</title>
        <authorList>
            <person name="Turmel M."/>
            <person name="Otis C."/>
            <person name="Lemieux C."/>
        </authorList>
    </citation>
    <scope>NUCLEOTIDE SEQUENCE [LARGE SCALE GENOMIC DNA]</scope>
</reference>
<evidence type="ECO:0000255" key="1">
    <source>
        <dbReference type="HAMAP-Rule" id="MF_01342"/>
    </source>
</evidence>
<evidence type="ECO:0000305" key="2"/>
<keyword id="KW-0150">Chloroplast</keyword>
<keyword id="KW-0934">Plastid</keyword>
<keyword id="KW-0687">Ribonucleoprotein</keyword>
<keyword id="KW-0689">Ribosomal protein</keyword>
<geneLocation type="chloroplast"/>
<gene>
    <name evidence="1" type="primary">rpl16</name>
</gene>
<proteinExistence type="inferred from homology"/>
<comment type="subunit">
    <text evidence="1">Part of the 50S ribosomal subunit.</text>
</comment>
<comment type="subcellular location">
    <subcellularLocation>
        <location>Plastid</location>
        <location>Chloroplast</location>
    </subcellularLocation>
</comment>
<comment type="similarity">
    <text evidence="1">Belongs to the universal ribosomal protein uL16 family.</text>
</comment>
<sequence>MLSPRKTKFRKHHRGRMKGISTRGNSIVFGKFALQALEPSWITSRQIEAGRRSMTRYARRGGKIWIRIFPDKPVTMRPAETRMGSGKGSPEYWVAVVKPGRILYEMDGVPENIARAAMKIAAYKMPNKTQFLIRDNKDLIDSKI</sequence>
<accession>Q1ACG0</accession>
<name>RK16_CHAVU</name>
<protein>
    <recommendedName>
        <fullName evidence="1">Large ribosomal subunit protein uL16c</fullName>
    </recommendedName>
    <alternativeName>
        <fullName evidence="2">50S ribosomal protein L16, chloroplastic</fullName>
    </alternativeName>
</protein>